<comment type="function">
    <text evidence="1">DNA-dependent RNA polymerase catalyzes the transcription of DNA into RNA using the four ribonucleoside triphosphates as substrates.</text>
</comment>
<comment type="catalytic activity">
    <reaction evidence="1">
        <text>RNA(n) + a ribonucleoside 5'-triphosphate = RNA(n+1) + diphosphate</text>
        <dbReference type="Rhea" id="RHEA:21248"/>
        <dbReference type="Rhea" id="RHEA-COMP:14527"/>
        <dbReference type="Rhea" id="RHEA-COMP:17342"/>
        <dbReference type="ChEBI" id="CHEBI:33019"/>
        <dbReference type="ChEBI" id="CHEBI:61557"/>
        <dbReference type="ChEBI" id="CHEBI:140395"/>
        <dbReference type="EC" id="2.7.7.6"/>
    </reaction>
</comment>
<comment type="cofactor">
    <cofactor evidence="1">
        <name>Mg(2+)</name>
        <dbReference type="ChEBI" id="CHEBI:18420"/>
    </cofactor>
    <text evidence="1">Binds 1 Mg(2+) ion per subunit.</text>
</comment>
<comment type="cofactor">
    <cofactor evidence="1">
        <name>Zn(2+)</name>
        <dbReference type="ChEBI" id="CHEBI:29105"/>
    </cofactor>
    <text evidence="1">Binds 2 Zn(2+) ions per subunit.</text>
</comment>
<comment type="subunit">
    <text evidence="1">The RNAP catalytic core consists of 2 alpha, 1 beta, 1 beta' and 1 omega subunit. When a sigma factor is associated with the core the holoenzyme is formed, which can initiate transcription.</text>
</comment>
<comment type="similarity">
    <text evidence="1">Belongs to the RNA polymerase beta' chain family.</text>
</comment>
<accession>Q02X60</accession>
<proteinExistence type="inferred from homology"/>
<feature type="chain" id="PRO_0000308846" description="DNA-directed RNA polymerase subunit beta'">
    <location>
        <begin position="1"/>
        <end position="1207"/>
    </location>
</feature>
<feature type="binding site" evidence="1">
    <location>
        <position position="60"/>
    </location>
    <ligand>
        <name>Zn(2+)</name>
        <dbReference type="ChEBI" id="CHEBI:29105"/>
        <label>1</label>
    </ligand>
</feature>
<feature type="binding site" evidence="1">
    <location>
        <position position="62"/>
    </location>
    <ligand>
        <name>Zn(2+)</name>
        <dbReference type="ChEBI" id="CHEBI:29105"/>
        <label>1</label>
    </ligand>
</feature>
<feature type="binding site" evidence="1">
    <location>
        <position position="75"/>
    </location>
    <ligand>
        <name>Zn(2+)</name>
        <dbReference type="ChEBI" id="CHEBI:29105"/>
        <label>1</label>
    </ligand>
</feature>
<feature type="binding site" evidence="1">
    <location>
        <position position="78"/>
    </location>
    <ligand>
        <name>Zn(2+)</name>
        <dbReference type="ChEBI" id="CHEBI:29105"/>
        <label>1</label>
    </ligand>
</feature>
<feature type="binding site" evidence="1">
    <location>
        <position position="450"/>
    </location>
    <ligand>
        <name>Mg(2+)</name>
        <dbReference type="ChEBI" id="CHEBI:18420"/>
    </ligand>
</feature>
<feature type="binding site" evidence="1">
    <location>
        <position position="452"/>
    </location>
    <ligand>
        <name>Mg(2+)</name>
        <dbReference type="ChEBI" id="CHEBI:18420"/>
    </ligand>
</feature>
<feature type="binding site" evidence="1">
    <location>
        <position position="454"/>
    </location>
    <ligand>
        <name>Mg(2+)</name>
        <dbReference type="ChEBI" id="CHEBI:18420"/>
    </ligand>
</feature>
<feature type="binding site" evidence="1">
    <location>
        <position position="818"/>
    </location>
    <ligand>
        <name>Zn(2+)</name>
        <dbReference type="ChEBI" id="CHEBI:29105"/>
        <label>2</label>
    </ligand>
</feature>
<feature type="binding site" evidence="1">
    <location>
        <position position="892"/>
    </location>
    <ligand>
        <name>Zn(2+)</name>
        <dbReference type="ChEBI" id="CHEBI:29105"/>
        <label>2</label>
    </ligand>
</feature>
<feature type="binding site" evidence="1">
    <location>
        <position position="899"/>
    </location>
    <ligand>
        <name>Zn(2+)</name>
        <dbReference type="ChEBI" id="CHEBI:29105"/>
        <label>2</label>
    </ligand>
</feature>
<feature type="binding site" evidence="1">
    <location>
        <position position="902"/>
    </location>
    <ligand>
        <name>Zn(2+)</name>
        <dbReference type="ChEBI" id="CHEBI:29105"/>
        <label>2</label>
    </ligand>
</feature>
<organism>
    <name type="scientific">Lactococcus lactis subsp. cremoris (strain SK11)</name>
    <dbReference type="NCBI Taxonomy" id="272622"/>
    <lineage>
        <taxon>Bacteria</taxon>
        <taxon>Bacillati</taxon>
        <taxon>Bacillota</taxon>
        <taxon>Bacilli</taxon>
        <taxon>Lactobacillales</taxon>
        <taxon>Streptococcaceae</taxon>
        <taxon>Lactococcus</taxon>
        <taxon>Lactococcus cremoris subsp. cremoris</taxon>
    </lineage>
</organism>
<keyword id="KW-0240">DNA-directed RNA polymerase</keyword>
<keyword id="KW-0460">Magnesium</keyword>
<keyword id="KW-0479">Metal-binding</keyword>
<keyword id="KW-0548">Nucleotidyltransferase</keyword>
<keyword id="KW-0804">Transcription</keyword>
<keyword id="KW-0808">Transferase</keyword>
<keyword id="KW-0862">Zinc</keyword>
<gene>
    <name evidence="1" type="primary">rpoC</name>
    <name type="ordered locus">LACR_1980</name>
</gene>
<sequence>MVDVNKFESMRIGIASPQKIRYWSFGEVKKPETINYRTQKPEREGLFDERIFGPQKDWECACGKLKGVFYKNQVCELCGVQVTTAKSRRERMGHIELAAPISHIWYFKGIPSRMGLALDMSPRALEEVIYFASYVVIDPKETDLEKKQLLTEREYREQLLKNGFGSFVAKMGAEAIQDLLNDVDIDKEVAELKEELKTVTGQRRVKIIRRLDVLSAFRKSGNALSWMVLNVLPVIPPDLRPMVQLDGGRFATSDLNDLYRRVINRNNRLKRLMELNAPNIIVQNEKRMLQEAVDTLIDNGRRGRPITGAGNRPLKSLSHMLKGKQGRFRQNLLGKRVDYSGRSVIAVGPTLKMYQCGVPREMAIELFKPFVMAQLVKKELAANIRAAKRKVERQDSDVWDVLETVVKEHPVLLNRAPTLHRLGIQAFEPVLIDGKAIRLHPLACEAYNADFDGDQMAIHLPLSEEAQAEARLLMLAAEHILNPKDGKPVVTPSQDMVLGNYYLTMEEKGREGEGMIFATPEEVEIAMRNGYVHLHTRIGIATKSLNKPWTENQQDKILVTTVGKVIFNSIIPEGMPYLNEPTDVNLTTSTDDRFFMDAGQNIKEVLAGIDTVRPFKKGYLGNIIAEVFKRYRTTATSEYLDRLKDLGYYQSTLAGLTVGIADIPVVEDKHEIIDAAHKRVEQITKQFRRGLITDDERYNAVTGVWRDAKESLEKRLIEEQDLTNPIVMMMDSGARGNISNFSQLAGMRGLMAAPNGKIMELPIISNFREGLSVLEMFFSTHGARKGMTDTALKTADSGYLTRRLVDVAQDVIIREDDCGTDRGLVIADIATGKEMVEPLFERLVGRYTRKSVLHPETGEMIIGDDTLISEDIARKIIEAGVKEVTIRSVFTCKTPHGVCKHCYGINLATGDAVEVGEAVGTIAAQSIGEPGTQLTMRTFHTGGVASSSDITQGLPRVQEIFEARNPKGEAIITEVTGTVESIVEDGATRTREITVKGKTDTRSYTVGMADVLMVEEGEFIHRGAPLIQGSIEPKHLLQVRDALSVETYLLGEVQKTYRSQGVEIGDKHIEVMVRQMLRKVRIMDNGSIDVLPGTLMDISDFEALNETALLNGEMPATGRPVLMGITKASLETNSFLSAASFQETTRVLTDAAIRGKEDHLLGLKENVIIGKIIPAGTGMFRYRNIEPLADLTNAPEVKEVETETVEN</sequence>
<protein>
    <recommendedName>
        <fullName evidence="1">DNA-directed RNA polymerase subunit beta'</fullName>
        <shortName evidence="1">RNAP subunit beta'</shortName>
        <ecNumber evidence="1">2.7.7.6</ecNumber>
    </recommendedName>
    <alternativeName>
        <fullName evidence="1">RNA polymerase subunit beta'</fullName>
    </alternativeName>
    <alternativeName>
        <fullName evidence="1">Transcriptase subunit beta'</fullName>
    </alternativeName>
</protein>
<evidence type="ECO:0000255" key="1">
    <source>
        <dbReference type="HAMAP-Rule" id="MF_01322"/>
    </source>
</evidence>
<reference key="1">
    <citation type="journal article" date="2006" name="Proc. Natl. Acad. Sci. U.S.A.">
        <title>Comparative genomics of the lactic acid bacteria.</title>
        <authorList>
            <person name="Makarova K.S."/>
            <person name="Slesarev A."/>
            <person name="Wolf Y.I."/>
            <person name="Sorokin A."/>
            <person name="Mirkin B."/>
            <person name="Koonin E.V."/>
            <person name="Pavlov A."/>
            <person name="Pavlova N."/>
            <person name="Karamychev V."/>
            <person name="Polouchine N."/>
            <person name="Shakhova V."/>
            <person name="Grigoriev I."/>
            <person name="Lou Y."/>
            <person name="Rohksar D."/>
            <person name="Lucas S."/>
            <person name="Huang K."/>
            <person name="Goodstein D.M."/>
            <person name="Hawkins T."/>
            <person name="Plengvidhya V."/>
            <person name="Welker D."/>
            <person name="Hughes J."/>
            <person name="Goh Y."/>
            <person name="Benson A."/>
            <person name="Baldwin K."/>
            <person name="Lee J.-H."/>
            <person name="Diaz-Muniz I."/>
            <person name="Dosti B."/>
            <person name="Smeianov V."/>
            <person name="Wechter W."/>
            <person name="Barabote R."/>
            <person name="Lorca G."/>
            <person name="Altermann E."/>
            <person name="Barrangou R."/>
            <person name="Ganesan B."/>
            <person name="Xie Y."/>
            <person name="Rawsthorne H."/>
            <person name="Tamir D."/>
            <person name="Parker C."/>
            <person name="Breidt F."/>
            <person name="Broadbent J.R."/>
            <person name="Hutkins R."/>
            <person name="O'Sullivan D."/>
            <person name="Steele J."/>
            <person name="Unlu G."/>
            <person name="Saier M.H. Jr."/>
            <person name="Klaenhammer T."/>
            <person name="Richardson P."/>
            <person name="Kozyavkin S."/>
            <person name="Weimer B.C."/>
            <person name="Mills D.A."/>
        </authorList>
    </citation>
    <scope>NUCLEOTIDE SEQUENCE [LARGE SCALE GENOMIC DNA]</scope>
    <source>
        <strain>SK11</strain>
    </source>
</reference>
<name>RPOC_LACLS</name>
<dbReference type="EC" id="2.7.7.6" evidence="1"/>
<dbReference type="EMBL" id="CP000425">
    <property type="protein sequence ID" value="ABJ73462.1"/>
    <property type="molecule type" value="Genomic_DNA"/>
</dbReference>
<dbReference type="RefSeq" id="WP_011676806.1">
    <property type="nucleotide sequence ID" value="NC_008527.1"/>
</dbReference>
<dbReference type="SMR" id="Q02X60"/>
<dbReference type="KEGG" id="llc:LACR_1980"/>
<dbReference type="HOGENOM" id="CLU_000524_3_1_9"/>
<dbReference type="Proteomes" id="UP000000240">
    <property type="component" value="Chromosome"/>
</dbReference>
<dbReference type="GO" id="GO:0000428">
    <property type="term" value="C:DNA-directed RNA polymerase complex"/>
    <property type="evidence" value="ECO:0007669"/>
    <property type="project" value="UniProtKB-KW"/>
</dbReference>
<dbReference type="GO" id="GO:0003677">
    <property type="term" value="F:DNA binding"/>
    <property type="evidence" value="ECO:0007669"/>
    <property type="project" value="UniProtKB-UniRule"/>
</dbReference>
<dbReference type="GO" id="GO:0003899">
    <property type="term" value="F:DNA-directed RNA polymerase activity"/>
    <property type="evidence" value="ECO:0007669"/>
    <property type="project" value="UniProtKB-UniRule"/>
</dbReference>
<dbReference type="GO" id="GO:0000287">
    <property type="term" value="F:magnesium ion binding"/>
    <property type="evidence" value="ECO:0007669"/>
    <property type="project" value="UniProtKB-UniRule"/>
</dbReference>
<dbReference type="GO" id="GO:0008270">
    <property type="term" value="F:zinc ion binding"/>
    <property type="evidence" value="ECO:0007669"/>
    <property type="project" value="UniProtKB-UniRule"/>
</dbReference>
<dbReference type="GO" id="GO:0006351">
    <property type="term" value="P:DNA-templated transcription"/>
    <property type="evidence" value="ECO:0007669"/>
    <property type="project" value="UniProtKB-UniRule"/>
</dbReference>
<dbReference type="CDD" id="cd02655">
    <property type="entry name" value="RNAP_beta'_C"/>
    <property type="match status" value="1"/>
</dbReference>
<dbReference type="CDD" id="cd01609">
    <property type="entry name" value="RNAP_beta'_N"/>
    <property type="match status" value="1"/>
</dbReference>
<dbReference type="FunFam" id="1.10.150.390:FF:000002">
    <property type="entry name" value="DNA-directed RNA polymerase subunit beta"/>
    <property type="match status" value="1"/>
</dbReference>
<dbReference type="Gene3D" id="1.10.132.30">
    <property type="match status" value="1"/>
</dbReference>
<dbReference type="Gene3D" id="1.10.150.390">
    <property type="match status" value="1"/>
</dbReference>
<dbReference type="Gene3D" id="1.10.1790.20">
    <property type="match status" value="1"/>
</dbReference>
<dbReference type="Gene3D" id="1.10.40.90">
    <property type="match status" value="1"/>
</dbReference>
<dbReference type="Gene3D" id="2.40.40.20">
    <property type="match status" value="1"/>
</dbReference>
<dbReference type="Gene3D" id="2.40.50.100">
    <property type="match status" value="1"/>
</dbReference>
<dbReference type="Gene3D" id="4.10.860.120">
    <property type="entry name" value="RNA polymerase II, clamp domain"/>
    <property type="match status" value="1"/>
</dbReference>
<dbReference type="Gene3D" id="1.10.274.100">
    <property type="entry name" value="RNA polymerase Rpb1, domain 3"/>
    <property type="match status" value="1"/>
</dbReference>
<dbReference type="HAMAP" id="MF_01322">
    <property type="entry name" value="RNApol_bact_RpoC"/>
    <property type="match status" value="1"/>
</dbReference>
<dbReference type="InterPro" id="IPR045867">
    <property type="entry name" value="DNA-dir_RpoC_beta_prime"/>
</dbReference>
<dbReference type="InterPro" id="IPR012754">
    <property type="entry name" value="DNA-dir_RpoC_beta_prime_bact"/>
</dbReference>
<dbReference type="InterPro" id="IPR000722">
    <property type="entry name" value="RNA_pol_asu"/>
</dbReference>
<dbReference type="InterPro" id="IPR006592">
    <property type="entry name" value="RNA_pol_N"/>
</dbReference>
<dbReference type="InterPro" id="IPR007080">
    <property type="entry name" value="RNA_pol_Rpb1_1"/>
</dbReference>
<dbReference type="InterPro" id="IPR007066">
    <property type="entry name" value="RNA_pol_Rpb1_3"/>
</dbReference>
<dbReference type="InterPro" id="IPR042102">
    <property type="entry name" value="RNA_pol_Rpb1_3_sf"/>
</dbReference>
<dbReference type="InterPro" id="IPR007083">
    <property type="entry name" value="RNA_pol_Rpb1_4"/>
</dbReference>
<dbReference type="InterPro" id="IPR007081">
    <property type="entry name" value="RNA_pol_Rpb1_5"/>
</dbReference>
<dbReference type="InterPro" id="IPR044893">
    <property type="entry name" value="RNA_pol_Rpb1_clamp_domain"/>
</dbReference>
<dbReference type="InterPro" id="IPR038120">
    <property type="entry name" value="Rpb1_funnel_sf"/>
</dbReference>
<dbReference type="NCBIfam" id="TIGR02386">
    <property type="entry name" value="rpoC_TIGR"/>
    <property type="match status" value="1"/>
</dbReference>
<dbReference type="PANTHER" id="PTHR19376">
    <property type="entry name" value="DNA-DIRECTED RNA POLYMERASE"/>
    <property type="match status" value="1"/>
</dbReference>
<dbReference type="PANTHER" id="PTHR19376:SF54">
    <property type="entry name" value="DNA-DIRECTED RNA POLYMERASE SUBUNIT BETA"/>
    <property type="match status" value="1"/>
</dbReference>
<dbReference type="Pfam" id="PF04997">
    <property type="entry name" value="RNA_pol_Rpb1_1"/>
    <property type="match status" value="1"/>
</dbReference>
<dbReference type="Pfam" id="PF00623">
    <property type="entry name" value="RNA_pol_Rpb1_2"/>
    <property type="match status" value="1"/>
</dbReference>
<dbReference type="Pfam" id="PF04983">
    <property type="entry name" value="RNA_pol_Rpb1_3"/>
    <property type="match status" value="1"/>
</dbReference>
<dbReference type="Pfam" id="PF05000">
    <property type="entry name" value="RNA_pol_Rpb1_4"/>
    <property type="match status" value="1"/>
</dbReference>
<dbReference type="Pfam" id="PF04998">
    <property type="entry name" value="RNA_pol_Rpb1_5"/>
    <property type="match status" value="1"/>
</dbReference>
<dbReference type="SMART" id="SM00663">
    <property type="entry name" value="RPOLA_N"/>
    <property type="match status" value="1"/>
</dbReference>
<dbReference type="SUPFAM" id="SSF64484">
    <property type="entry name" value="beta and beta-prime subunits of DNA dependent RNA-polymerase"/>
    <property type="match status" value="1"/>
</dbReference>